<sequence>MVEQKDKYRPCVGIMLFNRQGHAFIGKRFDSDSYWQMPQGGVDDGEELEQAALRELLEEVGTNKVKVITKSKDWIYYNLPEEVIPICWNGKYSGQKQRWFLMKFCGEDEDIDINYTGHPEFKEWRWQGIDSLVASAISFKKEVYKTVIEEFSSIIKASTISS</sequence>
<accession>C0R4X8</accession>
<feature type="chain" id="PRO_1000191853" description="RNA pyrophosphohydrolase">
    <location>
        <begin position="1"/>
        <end position="162"/>
    </location>
</feature>
<feature type="domain" description="Nudix hydrolase" evidence="1">
    <location>
        <begin position="7"/>
        <end position="149"/>
    </location>
</feature>
<feature type="short sequence motif" description="Nudix box">
    <location>
        <begin position="40"/>
        <end position="61"/>
    </location>
</feature>
<reference key="1">
    <citation type="journal article" date="2009" name="Proc. Natl. Acad. Sci. U.S.A.">
        <title>The mosaic genome structure of the Wolbachia wRi strain infecting Drosophila simulans.</title>
        <authorList>
            <person name="Klasson L."/>
            <person name="Westberg J."/>
            <person name="Sapountzis P."/>
            <person name="Naeslund K."/>
            <person name="Lutnaes Y."/>
            <person name="Darby A.C."/>
            <person name="Veneti Z."/>
            <person name="Chen L."/>
            <person name="Braig H.R."/>
            <person name="Garrett R."/>
            <person name="Bourtzis K."/>
            <person name="Andersson S.G."/>
        </authorList>
    </citation>
    <scope>NUCLEOTIDE SEQUENCE [LARGE SCALE GENOMIC DNA]</scope>
    <source>
        <strain>wRi</strain>
    </source>
</reference>
<organism>
    <name type="scientific">Wolbachia sp. subsp. Drosophila simulans (strain wRi)</name>
    <dbReference type="NCBI Taxonomy" id="66084"/>
    <lineage>
        <taxon>Bacteria</taxon>
        <taxon>Pseudomonadati</taxon>
        <taxon>Pseudomonadota</taxon>
        <taxon>Alphaproteobacteria</taxon>
        <taxon>Rickettsiales</taxon>
        <taxon>Anaplasmataceae</taxon>
        <taxon>Wolbachieae</taxon>
        <taxon>Wolbachia</taxon>
    </lineage>
</organism>
<protein>
    <recommendedName>
        <fullName evidence="1">RNA pyrophosphohydrolase</fullName>
        <ecNumber evidence="1">3.6.1.-</ecNumber>
    </recommendedName>
    <alternativeName>
        <fullName evidence="1">(Di)nucleoside polyphosphate hydrolase</fullName>
    </alternativeName>
</protein>
<keyword id="KW-0378">Hydrolase</keyword>
<comment type="function">
    <text evidence="1">Accelerates the degradation of transcripts by removing pyrophosphate from the 5'-end of triphosphorylated RNA, leading to a more labile monophosphorylated state that can stimulate subsequent ribonuclease cleavage.</text>
</comment>
<comment type="cofactor">
    <cofactor evidence="1">
        <name>a divalent metal cation</name>
        <dbReference type="ChEBI" id="CHEBI:60240"/>
    </cofactor>
</comment>
<comment type="similarity">
    <text evidence="1">Belongs to the Nudix hydrolase family. RppH subfamily.</text>
</comment>
<dbReference type="EC" id="3.6.1.-" evidence="1"/>
<dbReference type="EMBL" id="CP001391">
    <property type="protein sequence ID" value="ACN95970.1"/>
    <property type="molecule type" value="Genomic_DNA"/>
</dbReference>
<dbReference type="RefSeq" id="WP_006279569.1">
    <property type="nucleotide sequence ID" value="NZ_MKIF01000108.1"/>
</dbReference>
<dbReference type="SMR" id="C0R4X8"/>
<dbReference type="STRING" id="66084.WRi_012920"/>
<dbReference type="KEGG" id="wri:WRi_012920"/>
<dbReference type="HOGENOM" id="CLU_087195_3_0_5"/>
<dbReference type="Proteomes" id="UP000001293">
    <property type="component" value="Chromosome"/>
</dbReference>
<dbReference type="GO" id="GO:0034432">
    <property type="term" value="F:bis(5'-adenosyl)-pentaphosphatase activity"/>
    <property type="evidence" value="ECO:0007669"/>
    <property type="project" value="TreeGrafter"/>
</dbReference>
<dbReference type="GO" id="GO:0008893">
    <property type="term" value="F:guanosine-3',5'-bis(diphosphate) 3'-diphosphatase activity"/>
    <property type="evidence" value="ECO:0007669"/>
    <property type="project" value="TreeGrafter"/>
</dbReference>
<dbReference type="GO" id="GO:0006753">
    <property type="term" value="P:nucleoside phosphate metabolic process"/>
    <property type="evidence" value="ECO:0007669"/>
    <property type="project" value="TreeGrafter"/>
</dbReference>
<dbReference type="GO" id="GO:0019693">
    <property type="term" value="P:ribose phosphate metabolic process"/>
    <property type="evidence" value="ECO:0007669"/>
    <property type="project" value="TreeGrafter"/>
</dbReference>
<dbReference type="CDD" id="cd03671">
    <property type="entry name" value="NUDIX_Ap4A_hydrolase_plant_like"/>
    <property type="match status" value="1"/>
</dbReference>
<dbReference type="Gene3D" id="3.90.79.10">
    <property type="entry name" value="Nucleoside Triphosphate Pyrophosphohydrolase"/>
    <property type="match status" value="1"/>
</dbReference>
<dbReference type="HAMAP" id="MF_00298">
    <property type="entry name" value="Nudix_RppH"/>
    <property type="match status" value="1"/>
</dbReference>
<dbReference type="InterPro" id="IPR020476">
    <property type="entry name" value="Nudix_hydrolase"/>
</dbReference>
<dbReference type="InterPro" id="IPR015797">
    <property type="entry name" value="NUDIX_hydrolase-like_dom_sf"/>
</dbReference>
<dbReference type="InterPro" id="IPR020084">
    <property type="entry name" value="NUDIX_hydrolase_CS"/>
</dbReference>
<dbReference type="InterPro" id="IPR000086">
    <property type="entry name" value="NUDIX_hydrolase_dom"/>
</dbReference>
<dbReference type="InterPro" id="IPR022927">
    <property type="entry name" value="RppH"/>
</dbReference>
<dbReference type="NCBIfam" id="NF001936">
    <property type="entry name" value="PRK00714.1-3"/>
    <property type="match status" value="1"/>
</dbReference>
<dbReference type="NCBIfam" id="NF001937">
    <property type="entry name" value="PRK00714.1-4"/>
    <property type="match status" value="1"/>
</dbReference>
<dbReference type="NCBIfam" id="NF001938">
    <property type="entry name" value="PRK00714.1-5"/>
    <property type="match status" value="1"/>
</dbReference>
<dbReference type="PANTHER" id="PTHR11839:SF22">
    <property type="entry name" value="NUDIX HYDROLASE 26, CHLOROPLASTIC"/>
    <property type="match status" value="1"/>
</dbReference>
<dbReference type="PANTHER" id="PTHR11839">
    <property type="entry name" value="UDP/ADP-SUGAR PYROPHOSPHATASE"/>
    <property type="match status" value="1"/>
</dbReference>
<dbReference type="Pfam" id="PF00293">
    <property type="entry name" value="NUDIX"/>
    <property type="match status" value="1"/>
</dbReference>
<dbReference type="PRINTS" id="PR00502">
    <property type="entry name" value="NUDIXFAMILY"/>
</dbReference>
<dbReference type="SUPFAM" id="SSF55811">
    <property type="entry name" value="Nudix"/>
    <property type="match status" value="1"/>
</dbReference>
<dbReference type="PROSITE" id="PS51462">
    <property type="entry name" value="NUDIX"/>
    <property type="match status" value="1"/>
</dbReference>
<dbReference type="PROSITE" id="PS00893">
    <property type="entry name" value="NUDIX_BOX"/>
    <property type="match status" value="1"/>
</dbReference>
<evidence type="ECO:0000255" key="1">
    <source>
        <dbReference type="HAMAP-Rule" id="MF_00298"/>
    </source>
</evidence>
<gene>
    <name evidence="1" type="primary">rppH</name>
    <name evidence="1" type="synonym">nudH</name>
    <name type="ordered locus">WRi_012920</name>
</gene>
<name>RPPH_WOLWR</name>
<proteinExistence type="inferred from homology"/>